<comment type="function">
    <text evidence="3">NAD-dependent dehydrogenase that has high activity with L-rhamnose and L-lyxose, and shows only low activity with L-mannose. Has no activity with NADP. Catalyzes the first step in an alternative pathway for rhamnose utilization that does not involve phosphorylated intermediates.</text>
</comment>
<comment type="catalytic activity">
    <reaction evidence="3 4">
        <text>L-rhamnofuranose + NAD(+) = L-rhamnono-1,4-lactone + NADH + H(+)</text>
        <dbReference type="Rhea" id="RHEA:12649"/>
        <dbReference type="ChEBI" id="CHEBI:15378"/>
        <dbReference type="ChEBI" id="CHEBI:16935"/>
        <dbReference type="ChEBI" id="CHEBI:17937"/>
        <dbReference type="ChEBI" id="CHEBI:57540"/>
        <dbReference type="ChEBI" id="CHEBI:57945"/>
        <dbReference type="EC" id="1.1.1.173"/>
    </reaction>
</comment>
<comment type="biophysicochemical properties">
    <kinetics>
        <KM evidence="3 4">0.2 mM for NAD</KM>
        <KM evidence="3 4">1.7 mM for L-rhamnose</KM>
        <KM evidence="3 4">4.7 mM for L-lyxose</KM>
        <KM evidence="3 4">41 mM for L-mannose</KM>
    </kinetics>
    <phDependence>
        <text evidence="3 4">Optimum pH is 9.5.</text>
    </phDependence>
</comment>
<comment type="induction">
    <text evidence="3 4">Up-regulated by growth on rhamnose.</text>
</comment>
<comment type="miscellaneous">
    <text>Part of gene cluster that contains the genes for this rhamnose catabolic pathway.</text>
</comment>
<comment type="similarity">
    <text evidence="5">Belongs to the short-chain dehydrogenases/reductases (SDR) family.</text>
</comment>
<feature type="chain" id="PRO_0000418398" description="L-rhamnose-1-dehydrogenase">
    <location>
        <begin position="1"/>
        <end position="258"/>
    </location>
</feature>
<feature type="active site" description="Proton donor" evidence="2">
    <location>
        <position position="147"/>
    </location>
</feature>
<feature type="active site" description="Proton donor" evidence="2">
    <location>
        <position position="161"/>
    </location>
</feature>
<feature type="active site" description="Lowers pKa of active site Tyr" evidence="2">
    <location>
        <position position="165"/>
    </location>
</feature>
<feature type="binding site" evidence="1">
    <location>
        <position position="19"/>
    </location>
    <ligand>
        <name>NADP(+)</name>
        <dbReference type="ChEBI" id="CHEBI:58349"/>
    </ligand>
</feature>
<feature type="binding site" evidence="1">
    <location>
        <position position="68"/>
    </location>
    <ligand>
        <name>NADP(+)</name>
        <dbReference type="ChEBI" id="CHEBI:58349"/>
    </ligand>
</feature>
<feature type="binding site" evidence="2">
    <location>
        <position position="95"/>
    </location>
    <ligand>
        <name>NADP(+)</name>
        <dbReference type="ChEBI" id="CHEBI:58349"/>
    </ligand>
</feature>
<feature type="binding site" evidence="2">
    <location>
        <position position="161"/>
    </location>
    <ligand>
        <name>NADP(+)</name>
        <dbReference type="ChEBI" id="CHEBI:58349"/>
    </ligand>
</feature>
<feature type="binding site" evidence="2">
    <location>
        <position position="165"/>
    </location>
    <ligand>
        <name>NADP(+)</name>
        <dbReference type="ChEBI" id="CHEBI:58349"/>
    </ligand>
</feature>
<feature type="binding site" evidence="2">
    <location>
        <position position="194"/>
    </location>
    <ligand>
        <name>NADP(+)</name>
        <dbReference type="ChEBI" id="CHEBI:58349"/>
    </ligand>
</feature>
<feature type="binding site" evidence="1">
    <location>
        <position position="196"/>
    </location>
    <ligand>
        <name>NADP(+)</name>
        <dbReference type="ChEBI" id="CHEBI:58349"/>
    </ligand>
</feature>
<organism>
    <name type="scientific">Scheffersomyces stipitis (strain ATCC 58785 / CBS 6054 / NBRC 10063 / NRRL Y-11545)</name>
    <name type="common">Yeast</name>
    <name type="synonym">Pichia stipitis</name>
    <dbReference type="NCBI Taxonomy" id="322104"/>
    <lineage>
        <taxon>Eukaryota</taxon>
        <taxon>Fungi</taxon>
        <taxon>Dikarya</taxon>
        <taxon>Ascomycota</taxon>
        <taxon>Saccharomycotina</taxon>
        <taxon>Pichiomycetes</taxon>
        <taxon>Debaryomycetaceae</taxon>
        <taxon>Scheffersomyces</taxon>
    </lineage>
</organism>
<keyword id="KW-0521">NADP</keyword>
<keyword id="KW-0560">Oxidoreductase</keyword>
<keyword id="KW-1185">Reference proteome</keyword>
<keyword id="KW-0684">Rhamnose metabolism</keyword>
<evidence type="ECO:0000250" key="1">
    <source>
        <dbReference type="UniProtKB" id="L0E2Z4"/>
    </source>
</evidence>
<evidence type="ECO:0000250" key="2">
    <source>
        <dbReference type="UniProtKB" id="O93868"/>
    </source>
</evidence>
<evidence type="ECO:0000269" key="3">
    <source>
    </source>
</evidence>
<evidence type="ECO:0000269" key="4">
    <source>
    </source>
</evidence>
<evidence type="ECO:0000305" key="5"/>
<name>RM1DH_PICST</name>
<dbReference type="EC" id="1.1.1.173"/>
<dbReference type="EMBL" id="CP000502">
    <property type="protein sequence ID" value="ABN68405.2"/>
    <property type="molecule type" value="Genomic_DNA"/>
</dbReference>
<dbReference type="RefSeq" id="XP_001386434.2">
    <property type="nucleotide sequence ID" value="XM_001386397.1"/>
</dbReference>
<dbReference type="SMR" id="A3LZU7"/>
<dbReference type="STRING" id="322104.A3LZU7"/>
<dbReference type="GeneID" id="4840981"/>
<dbReference type="KEGG" id="pic:PICST_50944"/>
<dbReference type="eggNOG" id="KOG1200">
    <property type="taxonomic scope" value="Eukaryota"/>
</dbReference>
<dbReference type="HOGENOM" id="CLU_010194_1_1_1"/>
<dbReference type="InParanoid" id="A3LZU7"/>
<dbReference type="OMA" id="WEVANVI"/>
<dbReference type="OrthoDB" id="47007at2759"/>
<dbReference type="BioCyc" id="MetaCyc:MONOMER-16227"/>
<dbReference type="Proteomes" id="UP000002258">
    <property type="component" value="Chromosome 8"/>
</dbReference>
<dbReference type="GO" id="GO:0050034">
    <property type="term" value="F:L-rhamnose 1-dehydrogenase activity"/>
    <property type="evidence" value="ECO:0007669"/>
    <property type="project" value="UniProtKB-EC"/>
</dbReference>
<dbReference type="GO" id="GO:0003954">
    <property type="term" value="F:NADH dehydrogenase activity"/>
    <property type="evidence" value="ECO:0000314"/>
    <property type="project" value="UniProtKB"/>
</dbReference>
<dbReference type="GO" id="GO:0048038">
    <property type="term" value="F:quinone binding"/>
    <property type="evidence" value="ECO:0007669"/>
    <property type="project" value="TreeGrafter"/>
</dbReference>
<dbReference type="GO" id="GO:0006633">
    <property type="term" value="P:fatty acid biosynthetic process"/>
    <property type="evidence" value="ECO:0007669"/>
    <property type="project" value="TreeGrafter"/>
</dbReference>
<dbReference type="GO" id="GO:0019301">
    <property type="term" value="P:rhamnose catabolic process"/>
    <property type="evidence" value="ECO:0000314"/>
    <property type="project" value="UniProtKB"/>
</dbReference>
<dbReference type="FunFam" id="3.40.50.720:FF:000417">
    <property type="entry name" value="Glucose 1-dehydrogenase, putative"/>
    <property type="match status" value="1"/>
</dbReference>
<dbReference type="Gene3D" id="3.40.50.720">
    <property type="entry name" value="NAD(P)-binding Rossmann-like Domain"/>
    <property type="match status" value="1"/>
</dbReference>
<dbReference type="InterPro" id="IPR036291">
    <property type="entry name" value="NAD(P)-bd_dom_sf"/>
</dbReference>
<dbReference type="InterPro" id="IPR002347">
    <property type="entry name" value="SDR_fam"/>
</dbReference>
<dbReference type="NCBIfam" id="NF005559">
    <property type="entry name" value="PRK07231.1"/>
    <property type="match status" value="1"/>
</dbReference>
<dbReference type="PANTHER" id="PTHR42760:SF83">
    <property type="entry name" value="(3R)-3-HYDROXYACYL-COA DEHYDROGENASE"/>
    <property type="match status" value="1"/>
</dbReference>
<dbReference type="PANTHER" id="PTHR42760">
    <property type="entry name" value="SHORT-CHAIN DEHYDROGENASES/REDUCTASES FAMILY MEMBER"/>
    <property type="match status" value="1"/>
</dbReference>
<dbReference type="Pfam" id="PF13561">
    <property type="entry name" value="adh_short_C2"/>
    <property type="match status" value="1"/>
</dbReference>
<dbReference type="PRINTS" id="PR00081">
    <property type="entry name" value="GDHRDH"/>
</dbReference>
<dbReference type="PRINTS" id="PR00080">
    <property type="entry name" value="SDRFAMILY"/>
</dbReference>
<dbReference type="SUPFAM" id="SSF51735">
    <property type="entry name" value="NAD(P)-binding Rossmann-fold domains"/>
    <property type="match status" value="1"/>
</dbReference>
<gene>
    <name type="primary">DHG2</name>
    <name type="synonym">RHA1</name>
    <name type="ORF">PICST_50944</name>
</gene>
<accession>A3LZU7</accession>
<reference key="1">
    <citation type="journal article" date="2007" name="Nat. Biotechnol.">
        <title>Genome sequence of the lignocellulose-bioconverting and xylose-fermenting yeast Pichia stipitis.</title>
        <authorList>
            <person name="Jeffries T.W."/>
            <person name="Grigoriev I.V."/>
            <person name="Grimwood J."/>
            <person name="Laplaza J.M."/>
            <person name="Aerts A."/>
            <person name="Salamov A."/>
            <person name="Schmutz J."/>
            <person name="Lindquist E."/>
            <person name="Dehal P."/>
            <person name="Shapiro H."/>
            <person name="Jin Y.-S."/>
            <person name="Passoth V."/>
            <person name="Richardson P.M."/>
        </authorList>
    </citation>
    <scope>NUCLEOTIDE SEQUENCE [LARGE SCALE GENOMIC DNA]</scope>
    <source>
        <strain>ATCC 58785 / CBS 6054 / NBRC 10063 / NRRL Y-11545</strain>
    </source>
</reference>
<reference key="2">
    <citation type="journal article" date="2008" name="FEBS J.">
        <title>Identification in the yeast Pichia stipitis of the first L-rhamnose-1-dehydrogenase gene.</title>
        <authorList>
            <person name="Koivistoinen O.M."/>
            <person name="Hilditch S."/>
            <person name="Voutilainen S.P."/>
            <person name="Boer H."/>
            <person name="Penttila M."/>
            <person name="Richard P."/>
        </authorList>
    </citation>
    <scope>CATALYTIC ACTIVITY</scope>
    <scope>FUNCTION</scope>
    <scope>BIOPHYSICOCHEMICAL PROPERTIES</scope>
    <scope>INDUCTION</scope>
    <scope>IDENTIFICATION BY MASS SPECTROMETRY</scope>
</reference>
<reference key="3">
    <citation type="journal article" date="2008" name="J. Biol. Chem.">
        <title>Eukaryotic and bacterial gene clusters related to an alternative pathway of nonphosphorylated L-rhamnose metabolism.</title>
        <authorList>
            <person name="Watanabe S."/>
            <person name="Saimura M."/>
            <person name="Makino K."/>
        </authorList>
    </citation>
    <scope>CATALYTIC ACTIVITY</scope>
    <scope>PATHWAY</scope>
    <scope>BIOPHYSICOCHEMICAL PROPERTIES</scope>
    <scope>IDENTIFICATION OF GENE CLUSTER</scope>
    <scope>INDUCTION</scope>
    <scope>IDENTIFICATION BY MASS SPECTROMETRY</scope>
</reference>
<sequence>MTGLLNGKVVAITGGVTGIGRAIAIEMARNGAKVVVNHLPSEEQAQLAKELKEEISDGENNVLTIPGDISLPETGRRIVELAVEKFGEINVFVSNAGVCGFREFLEITPETLFQTVNINLNGAFFAIQAAAQQMVKQGKGGSIIGISSISALVGGAHQTHYTPTKAGILSLMQSTACALGKYGIRCNAILPGTISTALNEEDLKDPEKRKYMEGRIPLGRVGDPKDIAGPAIFLASDMSNYVNGAQLLVDGGLFVNLQ</sequence>
<protein>
    <recommendedName>
        <fullName>L-rhamnose-1-dehydrogenase</fullName>
        <ecNumber>1.1.1.173</ecNumber>
    </recommendedName>
</protein>
<proteinExistence type="evidence at protein level"/>